<sequence>MYAVFQSGGKQHRVSEGQTVRLEKLDIATGETVEFAEVLMIANGEEVKIGVPFVDGGVIKAEVVAHGRGEKVKIVKFRRRKHYRKQQGHRQWFTDVKITGISA</sequence>
<name>RL21_ECO57</name>
<organism>
    <name type="scientific">Escherichia coli O157:H7</name>
    <dbReference type="NCBI Taxonomy" id="83334"/>
    <lineage>
        <taxon>Bacteria</taxon>
        <taxon>Pseudomonadati</taxon>
        <taxon>Pseudomonadota</taxon>
        <taxon>Gammaproteobacteria</taxon>
        <taxon>Enterobacterales</taxon>
        <taxon>Enterobacteriaceae</taxon>
        <taxon>Escherichia</taxon>
    </lineage>
</organism>
<keyword id="KW-1185">Reference proteome</keyword>
<keyword id="KW-0687">Ribonucleoprotein</keyword>
<keyword id="KW-0689">Ribosomal protein</keyword>
<keyword id="KW-0694">RNA-binding</keyword>
<keyword id="KW-0699">rRNA-binding</keyword>
<proteinExistence type="inferred from homology"/>
<dbReference type="EMBL" id="AE005174">
    <property type="protein sequence ID" value="AAG58320.1"/>
    <property type="molecule type" value="Genomic_DNA"/>
</dbReference>
<dbReference type="EMBL" id="BA000007">
    <property type="protein sequence ID" value="BAB37488.1"/>
    <property type="molecule type" value="Genomic_DNA"/>
</dbReference>
<dbReference type="PIR" id="A91137">
    <property type="entry name" value="A91137"/>
</dbReference>
<dbReference type="PIR" id="D85982">
    <property type="entry name" value="D85982"/>
</dbReference>
<dbReference type="RefSeq" id="NP_312092.1">
    <property type="nucleotide sequence ID" value="NC_002695.1"/>
</dbReference>
<dbReference type="RefSeq" id="WP_000271401.1">
    <property type="nucleotide sequence ID" value="NZ_VOAI01000014.1"/>
</dbReference>
<dbReference type="SMR" id="P0AG49"/>
<dbReference type="STRING" id="155864.Z4549"/>
<dbReference type="GeneID" id="916091"/>
<dbReference type="GeneID" id="93778795"/>
<dbReference type="KEGG" id="ece:Z4549"/>
<dbReference type="KEGG" id="ecs:ECs_4065"/>
<dbReference type="PATRIC" id="fig|386585.9.peg.4244"/>
<dbReference type="eggNOG" id="COG0261">
    <property type="taxonomic scope" value="Bacteria"/>
</dbReference>
<dbReference type="HOGENOM" id="CLU_061463_3_3_6"/>
<dbReference type="OMA" id="HRQPFTK"/>
<dbReference type="Proteomes" id="UP000000558">
    <property type="component" value="Chromosome"/>
</dbReference>
<dbReference type="Proteomes" id="UP000002519">
    <property type="component" value="Chromosome"/>
</dbReference>
<dbReference type="GO" id="GO:0005737">
    <property type="term" value="C:cytoplasm"/>
    <property type="evidence" value="ECO:0007669"/>
    <property type="project" value="UniProtKB-ARBA"/>
</dbReference>
<dbReference type="GO" id="GO:1990904">
    <property type="term" value="C:ribonucleoprotein complex"/>
    <property type="evidence" value="ECO:0007669"/>
    <property type="project" value="UniProtKB-KW"/>
</dbReference>
<dbReference type="GO" id="GO:0005840">
    <property type="term" value="C:ribosome"/>
    <property type="evidence" value="ECO:0007669"/>
    <property type="project" value="UniProtKB-KW"/>
</dbReference>
<dbReference type="GO" id="GO:0019843">
    <property type="term" value="F:rRNA binding"/>
    <property type="evidence" value="ECO:0007669"/>
    <property type="project" value="UniProtKB-UniRule"/>
</dbReference>
<dbReference type="GO" id="GO:0003735">
    <property type="term" value="F:structural constituent of ribosome"/>
    <property type="evidence" value="ECO:0007669"/>
    <property type="project" value="InterPro"/>
</dbReference>
<dbReference type="GO" id="GO:0006412">
    <property type="term" value="P:translation"/>
    <property type="evidence" value="ECO:0007669"/>
    <property type="project" value="UniProtKB-UniRule"/>
</dbReference>
<dbReference type="HAMAP" id="MF_01363">
    <property type="entry name" value="Ribosomal_bL21"/>
    <property type="match status" value="1"/>
</dbReference>
<dbReference type="InterPro" id="IPR028909">
    <property type="entry name" value="bL21-like"/>
</dbReference>
<dbReference type="InterPro" id="IPR036164">
    <property type="entry name" value="bL21-like_sf"/>
</dbReference>
<dbReference type="InterPro" id="IPR001787">
    <property type="entry name" value="Ribosomal_bL21"/>
</dbReference>
<dbReference type="InterPro" id="IPR018258">
    <property type="entry name" value="Ribosomal_bL21_CS"/>
</dbReference>
<dbReference type="NCBIfam" id="TIGR00061">
    <property type="entry name" value="L21"/>
    <property type="match status" value="1"/>
</dbReference>
<dbReference type="PANTHER" id="PTHR21349">
    <property type="entry name" value="50S RIBOSOMAL PROTEIN L21"/>
    <property type="match status" value="1"/>
</dbReference>
<dbReference type="PANTHER" id="PTHR21349:SF0">
    <property type="entry name" value="LARGE RIBOSOMAL SUBUNIT PROTEIN BL21M"/>
    <property type="match status" value="1"/>
</dbReference>
<dbReference type="Pfam" id="PF00829">
    <property type="entry name" value="Ribosomal_L21p"/>
    <property type="match status" value="1"/>
</dbReference>
<dbReference type="SUPFAM" id="SSF141091">
    <property type="entry name" value="L21p-like"/>
    <property type="match status" value="1"/>
</dbReference>
<dbReference type="PROSITE" id="PS01169">
    <property type="entry name" value="RIBOSOMAL_L21"/>
    <property type="match status" value="1"/>
</dbReference>
<comment type="function">
    <text evidence="1">This protein binds to 23S rRNA in the presence of protein L20.</text>
</comment>
<comment type="subunit">
    <text evidence="1">Part of the 50S ribosomal subunit. Contacts protein L20.</text>
</comment>
<comment type="similarity">
    <text evidence="1">Belongs to the bacterial ribosomal protein bL21 family.</text>
</comment>
<reference key="1">
    <citation type="journal article" date="2001" name="Nature">
        <title>Genome sequence of enterohaemorrhagic Escherichia coli O157:H7.</title>
        <authorList>
            <person name="Perna N.T."/>
            <person name="Plunkett G. III"/>
            <person name="Burland V."/>
            <person name="Mau B."/>
            <person name="Glasner J.D."/>
            <person name="Rose D.J."/>
            <person name="Mayhew G.F."/>
            <person name="Evans P.S."/>
            <person name="Gregor J."/>
            <person name="Kirkpatrick H.A."/>
            <person name="Posfai G."/>
            <person name="Hackett J."/>
            <person name="Klink S."/>
            <person name="Boutin A."/>
            <person name="Shao Y."/>
            <person name="Miller L."/>
            <person name="Grotbeck E.J."/>
            <person name="Davis N.W."/>
            <person name="Lim A."/>
            <person name="Dimalanta E.T."/>
            <person name="Potamousis K."/>
            <person name="Apodaca J."/>
            <person name="Anantharaman T.S."/>
            <person name="Lin J."/>
            <person name="Yen G."/>
            <person name="Schwartz D.C."/>
            <person name="Welch R.A."/>
            <person name="Blattner F.R."/>
        </authorList>
    </citation>
    <scope>NUCLEOTIDE SEQUENCE [LARGE SCALE GENOMIC DNA]</scope>
    <source>
        <strain>O157:H7 / EDL933 / ATCC 700927 / EHEC</strain>
    </source>
</reference>
<reference key="2">
    <citation type="journal article" date="2001" name="DNA Res.">
        <title>Complete genome sequence of enterohemorrhagic Escherichia coli O157:H7 and genomic comparison with a laboratory strain K-12.</title>
        <authorList>
            <person name="Hayashi T."/>
            <person name="Makino K."/>
            <person name="Ohnishi M."/>
            <person name="Kurokawa K."/>
            <person name="Ishii K."/>
            <person name="Yokoyama K."/>
            <person name="Han C.-G."/>
            <person name="Ohtsubo E."/>
            <person name="Nakayama K."/>
            <person name="Murata T."/>
            <person name="Tanaka M."/>
            <person name="Tobe T."/>
            <person name="Iida T."/>
            <person name="Takami H."/>
            <person name="Honda T."/>
            <person name="Sasakawa C."/>
            <person name="Ogasawara N."/>
            <person name="Yasunaga T."/>
            <person name="Kuhara S."/>
            <person name="Shiba T."/>
            <person name="Hattori M."/>
            <person name="Shinagawa H."/>
        </authorList>
    </citation>
    <scope>NUCLEOTIDE SEQUENCE [LARGE SCALE GENOMIC DNA]</scope>
    <source>
        <strain>O157:H7 / Sakai / RIMD 0509952 / EHEC</strain>
    </source>
</reference>
<accession>P0AG49</accession>
<accession>P02422</accession>
<gene>
    <name evidence="1" type="primary">rplU</name>
    <name type="ordered locus">Z4549</name>
    <name type="ordered locus">ECs4065</name>
</gene>
<feature type="chain" id="PRO_0000181001" description="Large ribosomal subunit protein bL21">
    <location>
        <begin position="1"/>
        <end position="103"/>
    </location>
</feature>
<evidence type="ECO:0000255" key="1">
    <source>
        <dbReference type="HAMAP-Rule" id="MF_01363"/>
    </source>
</evidence>
<evidence type="ECO:0000305" key="2"/>
<protein>
    <recommendedName>
        <fullName evidence="1">Large ribosomal subunit protein bL21</fullName>
    </recommendedName>
    <alternativeName>
        <fullName evidence="2">50S ribosomal protein L21</fullName>
    </alternativeName>
</protein>